<dbReference type="EC" id="7.1.1.-" evidence="1"/>
<dbReference type="EMBL" id="CT573326">
    <property type="protein sequence ID" value="CAK16229.1"/>
    <property type="molecule type" value="Genomic_DNA"/>
</dbReference>
<dbReference type="RefSeq" id="WP_008096180.1">
    <property type="nucleotide sequence ID" value="NC_008027.1"/>
</dbReference>
<dbReference type="SMR" id="Q1I7Z9"/>
<dbReference type="STRING" id="384676.PSEEN3485"/>
<dbReference type="KEGG" id="pen:PSEEN3485"/>
<dbReference type="eggNOG" id="COG0377">
    <property type="taxonomic scope" value="Bacteria"/>
</dbReference>
<dbReference type="HOGENOM" id="CLU_055737_7_3_6"/>
<dbReference type="OrthoDB" id="9786737at2"/>
<dbReference type="Proteomes" id="UP000000658">
    <property type="component" value="Chromosome"/>
</dbReference>
<dbReference type="GO" id="GO:0005886">
    <property type="term" value="C:plasma membrane"/>
    <property type="evidence" value="ECO:0007669"/>
    <property type="project" value="UniProtKB-SubCell"/>
</dbReference>
<dbReference type="GO" id="GO:0045271">
    <property type="term" value="C:respiratory chain complex I"/>
    <property type="evidence" value="ECO:0007669"/>
    <property type="project" value="TreeGrafter"/>
</dbReference>
<dbReference type="GO" id="GO:0051539">
    <property type="term" value="F:4 iron, 4 sulfur cluster binding"/>
    <property type="evidence" value="ECO:0007669"/>
    <property type="project" value="UniProtKB-KW"/>
</dbReference>
<dbReference type="GO" id="GO:0005506">
    <property type="term" value="F:iron ion binding"/>
    <property type="evidence" value="ECO:0007669"/>
    <property type="project" value="UniProtKB-UniRule"/>
</dbReference>
<dbReference type="GO" id="GO:0008137">
    <property type="term" value="F:NADH dehydrogenase (ubiquinone) activity"/>
    <property type="evidence" value="ECO:0007669"/>
    <property type="project" value="InterPro"/>
</dbReference>
<dbReference type="GO" id="GO:0050136">
    <property type="term" value="F:NADH:ubiquinone reductase (non-electrogenic) activity"/>
    <property type="evidence" value="ECO:0007669"/>
    <property type="project" value="UniProtKB-UniRule"/>
</dbReference>
<dbReference type="GO" id="GO:0048038">
    <property type="term" value="F:quinone binding"/>
    <property type="evidence" value="ECO:0007669"/>
    <property type="project" value="UniProtKB-KW"/>
</dbReference>
<dbReference type="GO" id="GO:0009060">
    <property type="term" value="P:aerobic respiration"/>
    <property type="evidence" value="ECO:0007669"/>
    <property type="project" value="TreeGrafter"/>
</dbReference>
<dbReference type="GO" id="GO:0015990">
    <property type="term" value="P:electron transport coupled proton transport"/>
    <property type="evidence" value="ECO:0007669"/>
    <property type="project" value="TreeGrafter"/>
</dbReference>
<dbReference type="FunFam" id="3.40.50.12280:FF:000002">
    <property type="entry name" value="NADH-quinone oxidoreductase subunit B"/>
    <property type="match status" value="1"/>
</dbReference>
<dbReference type="Gene3D" id="3.40.50.12280">
    <property type="match status" value="1"/>
</dbReference>
<dbReference type="HAMAP" id="MF_01356">
    <property type="entry name" value="NDH1_NuoB"/>
    <property type="match status" value="1"/>
</dbReference>
<dbReference type="InterPro" id="IPR006137">
    <property type="entry name" value="NADH_UbQ_OxRdtase-like_20kDa"/>
</dbReference>
<dbReference type="InterPro" id="IPR006138">
    <property type="entry name" value="NADH_UQ_OxRdtase_20Kd_su"/>
</dbReference>
<dbReference type="NCBIfam" id="TIGR01957">
    <property type="entry name" value="nuoB_fam"/>
    <property type="match status" value="1"/>
</dbReference>
<dbReference type="NCBIfam" id="NF005012">
    <property type="entry name" value="PRK06411.1"/>
    <property type="match status" value="1"/>
</dbReference>
<dbReference type="PANTHER" id="PTHR11995">
    <property type="entry name" value="NADH DEHYDROGENASE"/>
    <property type="match status" value="1"/>
</dbReference>
<dbReference type="PANTHER" id="PTHR11995:SF14">
    <property type="entry name" value="NADH DEHYDROGENASE [UBIQUINONE] IRON-SULFUR PROTEIN 7, MITOCHONDRIAL"/>
    <property type="match status" value="1"/>
</dbReference>
<dbReference type="Pfam" id="PF01058">
    <property type="entry name" value="Oxidored_q6"/>
    <property type="match status" value="1"/>
</dbReference>
<dbReference type="SUPFAM" id="SSF56770">
    <property type="entry name" value="HydA/Nqo6-like"/>
    <property type="match status" value="1"/>
</dbReference>
<dbReference type="PROSITE" id="PS01150">
    <property type="entry name" value="COMPLEX1_20K"/>
    <property type="match status" value="1"/>
</dbReference>
<comment type="function">
    <text evidence="1">NDH-1 shuttles electrons from NADH, via FMN and iron-sulfur (Fe-S) centers, to quinones in the respiratory chain. The immediate electron acceptor for the enzyme in this species is believed to be ubiquinone. Couples the redox reaction to proton translocation (for every two electrons transferred, four hydrogen ions are translocated across the cytoplasmic membrane), and thus conserves the redox energy in a proton gradient.</text>
</comment>
<comment type="catalytic activity">
    <reaction evidence="1">
        <text>a quinone + NADH + 5 H(+)(in) = a quinol + NAD(+) + 4 H(+)(out)</text>
        <dbReference type="Rhea" id="RHEA:57888"/>
        <dbReference type="ChEBI" id="CHEBI:15378"/>
        <dbReference type="ChEBI" id="CHEBI:24646"/>
        <dbReference type="ChEBI" id="CHEBI:57540"/>
        <dbReference type="ChEBI" id="CHEBI:57945"/>
        <dbReference type="ChEBI" id="CHEBI:132124"/>
    </reaction>
</comment>
<comment type="cofactor">
    <cofactor evidence="1">
        <name>[4Fe-4S] cluster</name>
        <dbReference type="ChEBI" id="CHEBI:49883"/>
    </cofactor>
    <text evidence="1">Binds 1 [4Fe-4S] cluster.</text>
</comment>
<comment type="subunit">
    <text evidence="1">NDH-1 is composed of 13 different subunits. Subunits NuoB, CD, E, F, and G constitute the peripheral sector of the complex.</text>
</comment>
<comment type="subcellular location">
    <subcellularLocation>
        <location evidence="1">Cell inner membrane</location>
        <topology evidence="1">Peripheral membrane protein</topology>
        <orientation evidence="1">Cytoplasmic side</orientation>
    </subcellularLocation>
</comment>
<comment type="similarity">
    <text evidence="1">Belongs to the complex I 20 kDa subunit family.</text>
</comment>
<proteinExistence type="inferred from homology"/>
<organism>
    <name type="scientific">Pseudomonas entomophila (strain L48)</name>
    <dbReference type="NCBI Taxonomy" id="384676"/>
    <lineage>
        <taxon>Bacteria</taxon>
        <taxon>Pseudomonadati</taxon>
        <taxon>Pseudomonadota</taxon>
        <taxon>Gammaproteobacteria</taxon>
        <taxon>Pseudomonadales</taxon>
        <taxon>Pseudomonadaceae</taxon>
        <taxon>Pseudomonas</taxon>
    </lineage>
</organism>
<accession>Q1I7Z9</accession>
<protein>
    <recommendedName>
        <fullName evidence="1">NADH-quinone oxidoreductase subunit B</fullName>
        <ecNumber evidence="1">7.1.1.-</ecNumber>
    </recommendedName>
    <alternativeName>
        <fullName evidence="1">NADH dehydrogenase I subunit B</fullName>
    </alternativeName>
    <alternativeName>
        <fullName evidence="1">NDH-1 subunit B</fullName>
    </alternativeName>
</protein>
<evidence type="ECO:0000255" key="1">
    <source>
        <dbReference type="HAMAP-Rule" id="MF_01356"/>
    </source>
</evidence>
<sequence>MQYNLTRIDPDAPNEQYPVGERETVTDQLLEDQVHKNIYMGKLEDVLRGAVNWGRKNSLWPYNFGLSCCYVEMTTAFTAPHDIARFGAEVIRASPRQADFMVIAGTCFVKMAPIIQRLYEQMLEPKWVISMGSCANSGGMYDIYSVVQGVDKFLPVDVYVPGCPPRPEAFLQGLMLLQESIGQERRPLSWVVGDQGIYRAEMPAQKDLRREQRIAVTNLRSPDEV</sequence>
<feature type="chain" id="PRO_0000376310" description="NADH-quinone oxidoreductase subunit B">
    <location>
        <begin position="1"/>
        <end position="225"/>
    </location>
</feature>
<feature type="binding site" evidence="1">
    <location>
        <position position="68"/>
    </location>
    <ligand>
        <name>[4Fe-4S] cluster</name>
        <dbReference type="ChEBI" id="CHEBI:49883"/>
    </ligand>
</feature>
<feature type="binding site" evidence="1">
    <location>
        <position position="69"/>
    </location>
    <ligand>
        <name>[4Fe-4S] cluster</name>
        <dbReference type="ChEBI" id="CHEBI:49883"/>
    </ligand>
</feature>
<feature type="binding site" evidence="1">
    <location>
        <position position="134"/>
    </location>
    <ligand>
        <name>[4Fe-4S] cluster</name>
        <dbReference type="ChEBI" id="CHEBI:49883"/>
    </ligand>
</feature>
<feature type="binding site" evidence="1">
    <location>
        <position position="163"/>
    </location>
    <ligand>
        <name>[4Fe-4S] cluster</name>
        <dbReference type="ChEBI" id="CHEBI:49883"/>
    </ligand>
</feature>
<gene>
    <name evidence="1" type="primary">nuoB</name>
    <name type="ordered locus">PSEEN3485</name>
</gene>
<reference key="1">
    <citation type="journal article" date="2006" name="Nat. Biotechnol.">
        <title>Complete genome sequence of the entomopathogenic and metabolically versatile soil bacterium Pseudomonas entomophila.</title>
        <authorList>
            <person name="Vodovar N."/>
            <person name="Vallenet D."/>
            <person name="Cruveiller S."/>
            <person name="Rouy Z."/>
            <person name="Barbe V."/>
            <person name="Acosta C."/>
            <person name="Cattolico L."/>
            <person name="Jubin C."/>
            <person name="Lajus A."/>
            <person name="Segurens B."/>
            <person name="Vacherie B."/>
            <person name="Wincker P."/>
            <person name="Weissenbach J."/>
            <person name="Lemaitre B."/>
            <person name="Medigue C."/>
            <person name="Boccard F."/>
        </authorList>
    </citation>
    <scope>NUCLEOTIDE SEQUENCE [LARGE SCALE GENOMIC DNA]</scope>
    <source>
        <strain>L48</strain>
    </source>
</reference>
<name>NUOB_PSEE4</name>
<keyword id="KW-0004">4Fe-4S</keyword>
<keyword id="KW-0997">Cell inner membrane</keyword>
<keyword id="KW-1003">Cell membrane</keyword>
<keyword id="KW-0408">Iron</keyword>
<keyword id="KW-0411">Iron-sulfur</keyword>
<keyword id="KW-0472">Membrane</keyword>
<keyword id="KW-0479">Metal-binding</keyword>
<keyword id="KW-0520">NAD</keyword>
<keyword id="KW-0874">Quinone</keyword>
<keyword id="KW-1278">Translocase</keyword>
<keyword id="KW-0813">Transport</keyword>
<keyword id="KW-0830">Ubiquinone</keyword>